<name>HPPD_DAUCA</name>
<comment type="catalytic activity">
    <reaction>
        <text>3-(4-hydroxyphenyl)pyruvate + O2 = homogentisate + CO2</text>
        <dbReference type="Rhea" id="RHEA:16189"/>
        <dbReference type="ChEBI" id="CHEBI:15379"/>
        <dbReference type="ChEBI" id="CHEBI:16169"/>
        <dbReference type="ChEBI" id="CHEBI:16526"/>
        <dbReference type="ChEBI" id="CHEBI:36242"/>
        <dbReference type="EC" id="1.13.11.27"/>
    </reaction>
</comment>
<comment type="cofactor">
    <cofactor evidence="1">
        <name>Fe cation</name>
        <dbReference type="ChEBI" id="CHEBI:24875"/>
    </cofactor>
    <text evidence="1">Binds 1 Fe cation per subunit.</text>
</comment>
<comment type="pathway">
    <text>Amino-acid degradation; L-phenylalanine degradation; acetoacetate and fumarate from L-phenylalanine: step 3/6.</text>
</comment>
<comment type="pathway">
    <text>Cofactor biosynthesis; prenylquinone biosynthesis.</text>
</comment>
<comment type="subcellular location">
    <subcellularLocation>
        <location>Cytoplasm</location>
    </subcellularLocation>
</comment>
<comment type="similarity">
    <text evidence="3">Belongs to the 4HPPD family.</text>
</comment>
<feature type="chain" id="PRO_0000088398" description="4-hydroxyphenylpyruvate dioxygenase">
    <location>
        <begin position="1"/>
        <end position="442"/>
    </location>
</feature>
<feature type="domain" description="VOC 1" evidence="2">
    <location>
        <begin position="45"/>
        <end position="200"/>
    </location>
</feature>
<feature type="domain" description="VOC 2" evidence="2">
    <location>
        <begin position="216"/>
        <end position="376"/>
    </location>
</feature>
<feature type="binding site" evidence="1">
    <location>
        <position position="219"/>
    </location>
    <ligand>
        <name>Fe cation</name>
        <dbReference type="ChEBI" id="CHEBI:24875"/>
    </ligand>
</feature>
<feature type="binding site" evidence="1">
    <location>
        <position position="301"/>
    </location>
    <ligand>
        <name>Fe cation</name>
        <dbReference type="ChEBI" id="CHEBI:24875"/>
    </ligand>
</feature>
<feature type="binding site" evidence="1">
    <location>
        <position position="387"/>
    </location>
    <ligand>
        <name>Fe cation</name>
        <dbReference type="ChEBI" id="CHEBI:24875"/>
    </ligand>
</feature>
<sequence>MGKKQSEAEILSSNSSNTSPATFKLVGFNNFVRANPKSDHFAVKRFHHIEFWCGDATNTSRRFSWGLGMPLVAKSDLSTGNSVHASYLVRSANLSFVFTAPYSPSTTTSSGSAAIPSFSASGFHSFAAKHGLAVRAIALEVADVAAAFEASVARGARPASAPVELDDQAWLAEVELYGDVVLRFVSFGREEGLFLPGFEAVEGTASFPDLDYGIRRLDHAVGNVTELGPVVEYIKGFTGFHEFAEFTAEDVGTLESGLNSVVLANNEEMVLLPLNEPVYGTKRKSQIQTYLEHNEGAGVQHLALVSEDIFRTLREMRKRSCLGGFEFMPSPPPTYYKNLKNRVGDVLSDEQIKECEDLGILVDRDDQGTLLQIFTKPVGDRPTLFIEIIQRVGCMLKDDAGQMYQKGGCGGFGKGNFSELFKSIEEYEKTLEAKQITGSAAA</sequence>
<evidence type="ECO:0000250" key="1"/>
<evidence type="ECO:0000255" key="2">
    <source>
        <dbReference type="PROSITE-ProRule" id="PRU01163"/>
    </source>
</evidence>
<evidence type="ECO:0000305" key="3"/>
<organism>
    <name type="scientific">Daucus carota</name>
    <name type="common">Wild carrot</name>
    <dbReference type="NCBI Taxonomy" id="4039"/>
    <lineage>
        <taxon>Eukaryota</taxon>
        <taxon>Viridiplantae</taxon>
        <taxon>Streptophyta</taxon>
        <taxon>Embryophyta</taxon>
        <taxon>Tracheophyta</taxon>
        <taxon>Spermatophyta</taxon>
        <taxon>Magnoliopsida</taxon>
        <taxon>eudicotyledons</taxon>
        <taxon>Gunneridae</taxon>
        <taxon>Pentapetalae</taxon>
        <taxon>asterids</taxon>
        <taxon>campanulids</taxon>
        <taxon>Apiales</taxon>
        <taxon>Apiaceae</taxon>
        <taxon>Apioideae</taxon>
        <taxon>Scandiceae</taxon>
        <taxon>Daucinae</taxon>
        <taxon>Daucus</taxon>
        <taxon>Daucus sect. Daucus</taxon>
    </lineage>
</organism>
<dbReference type="EC" id="1.13.11.27"/>
<dbReference type="EMBL" id="U87257">
    <property type="protein sequence ID" value="AAC49815.1"/>
    <property type="molecule type" value="mRNA"/>
</dbReference>
<dbReference type="PIR" id="T14353">
    <property type="entry name" value="T14353"/>
</dbReference>
<dbReference type="SMR" id="O23920"/>
<dbReference type="BindingDB" id="O23920"/>
<dbReference type="ChEMBL" id="CHEMBL4105881"/>
<dbReference type="SABIO-RK" id="O23920"/>
<dbReference type="UniPathway" id="UPA00139">
    <property type="reaction ID" value="UER00362"/>
</dbReference>
<dbReference type="UniPathway" id="UPA00975"/>
<dbReference type="GO" id="GO:0005737">
    <property type="term" value="C:cytoplasm"/>
    <property type="evidence" value="ECO:0007669"/>
    <property type="project" value="UniProtKB-SubCell"/>
</dbReference>
<dbReference type="GO" id="GO:0003868">
    <property type="term" value="F:4-hydroxyphenylpyruvate dioxygenase activity"/>
    <property type="evidence" value="ECO:0007669"/>
    <property type="project" value="UniProtKB-EC"/>
</dbReference>
<dbReference type="GO" id="GO:0046872">
    <property type="term" value="F:metal ion binding"/>
    <property type="evidence" value="ECO:0007669"/>
    <property type="project" value="UniProtKB-KW"/>
</dbReference>
<dbReference type="GO" id="GO:0006559">
    <property type="term" value="P:L-phenylalanine catabolic process"/>
    <property type="evidence" value="ECO:0007669"/>
    <property type="project" value="UniProtKB-UniPathway"/>
</dbReference>
<dbReference type="GO" id="GO:0006572">
    <property type="term" value="P:tyrosine catabolic process"/>
    <property type="evidence" value="ECO:0007669"/>
    <property type="project" value="UniProtKB-KW"/>
</dbReference>
<dbReference type="CDD" id="cd07250">
    <property type="entry name" value="HPPD_C_like"/>
    <property type="match status" value="1"/>
</dbReference>
<dbReference type="CDD" id="cd08342">
    <property type="entry name" value="HPPD_N_like"/>
    <property type="match status" value="1"/>
</dbReference>
<dbReference type="FunFam" id="3.10.180.10:FF:000013">
    <property type="entry name" value="4-hydroxyphenylpyruvate dioxygenase"/>
    <property type="match status" value="1"/>
</dbReference>
<dbReference type="FunFam" id="3.10.180.10:FF:000025">
    <property type="entry name" value="4-hydroxyphenylpyruvate dioxygenase"/>
    <property type="match status" value="1"/>
</dbReference>
<dbReference type="Gene3D" id="3.10.180.10">
    <property type="entry name" value="2,3-Dihydroxybiphenyl 1,2-Dioxygenase, domain 1"/>
    <property type="match status" value="2"/>
</dbReference>
<dbReference type="InterPro" id="IPR005956">
    <property type="entry name" value="4OHPhenylPyrv_dOase"/>
</dbReference>
<dbReference type="InterPro" id="IPR041735">
    <property type="entry name" value="4OHPhenylPyrv_dOase_C"/>
</dbReference>
<dbReference type="InterPro" id="IPR041736">
    <property type="entry name" value="4OHPhenylPyrv_dOase_N"/>
</dbReference>
<dbReference type="InterPro" id="IPR029068">
    <property type="entry name" value="Glyas_Bleomycin-R_OHBP_Dase"/>
</dbReference>
<dbReference type="InterPro" id="IPR037523">
    <property type="entry name" value="VOC"/>
</dbReference>
<dbReference type="NCBIfam" id="TIGR01263">
    <property type="entry name" value="4HPPD"/>
    <property type="match status" value="1"/>
</dbReference>
<dbReference type="PANTHER" id="PTHR11959">
    <property type="entry name" value="4-HYDROXYPHENYLPYRUVATE DIOXYGENASE"/>
    <property type="match status" value="1"/>
</dbReference>
<dbReference type="PANTHER" id="PTHR11959:SF1">
    <property type="entry name" value="4-HYDROXYPHENYLPYRUVATE DIOXYGENASE"/>
    <property type="match status" value="1"/>
</dbReference>
<dbReference type="PIRSF" id="PIRSF009283">
    <property type="entry name" value="HPP_dOase"/>
    <property type="match status" value="1"/>
</dbReference>
<dbReference type="SUPFAM" id="SSF54593">
    <property type="entry name" value="Glyoxalase/Bleomycin resistance protein/Dihydroxybiphenyl dioxygenase"/>
    <property type="match status" value="1"/>
</dbReference>
<dbReference type="PROSITE" id="PS51819">
    <property type="entry name" value="VOC"/>
    <property type="match status" value="2"/>
</dbReference>
<reference key="1">
    <citation type="journal article" date="1997" name="Biochem. J.">
        <title>Subcellular localization and purification of a p-hydroxyphenylpyruvate dioxygenase from cultured carrot cells and characterization of the corresponding cDNA.</title>
        <authorList>
            <person name="Garcia I."/>
            <person name="Rodgers M."/>
            <person name="Lenne C."/>
            <person name="Rolland A."/>
            <person name="Sailland A."/>
            <person name="Matringe M."/>
        </authorList>
    </citation>
    <scope>NUCLEOTIDE SEQUENCE [MRNA]</scope>
</reference>
<proteinExistence type="evidence at transcript level"/>
<protein>
    <recommendedName>
        <fullName>4-hydroxyphenylpyruvate dioxygenase</fullName>
        <ecNumber>1.13.11.27</ecNumber>
    </recommendedName>
    <alternativeName>
        <fullName>4-hydroxyphenylpyruvic acid oxidase</fullName>
        <shortName>4HPPD</shortName>
        <shortName>HPD</shortName>
        <shortName>HPPDase</shortName>
    </alternativeName>
</protein>
<accession>O23920</accession>
<keyword id="KW-0963">Cytoplasm</keyword>
<keyword id="KW-0223">Dioxygenase</keyword>
<keyword id="KW-0408">Iron</keyword>
<keyword id="KW-0479">Metal-binding</keyword>
<keyword id="KW-0560">Oxidoreductase</keyword>
<keyword id="KW-0585">Phenylalanine catabolism</keyword>
<keyword id="KW-0677">Repeat</keyword>
<keyword id="KW-0828">Tyrosine catabolism</keyword>